<sequence>MSISVGPSREDKPLSGGAKPPRWYKQLTPAQWKAFVAAWIGYALDGFDFVLITLVLTDIKQEFGLTLIQATSLISAAFISRWFGGLVLGAMGDRYGRKLAMITSIVLFSFGTLACGLAPGYTTLFIARLIIGIGMAGEYGSSSTYVMESWPKNMRNKASGFLISGFSIGAVLAAQAYSYVVPAFGWRMLFYIGLLPIIFALWLRKNLPEAEDWEKAQSKQKKGKQVTDRNMVDILYRSHLSYLNIGLTIFAAVSLYLCFTGMVSTLLVVVLGILCAAIFIYFMVQTSGDRWPTGVMLMVVVFCAFLYSWPIQALLPTYLKMDLGYDPHTVGNILFFSGFGAAVGCCVGGFLGDWLGTRKAYVTSLLISQLLIIPLFAIQGSSILFLGGLLFLQQMLGQGIAGLLPKLLGGYFDTEQRAAGLGFTYNVGALGGALAPILGASIAQHLSLGTALGSLSFSLTFVVILLIGFDMPSRVQRWVRPSGLRMVDAIDGKPFSGAITAQHARVVTQK</sequence>
<comment type="function">
    <text evidence="1">Catalyzes the proton-dependent transport of sialic acid.</text>
</comment>
<comment type="catalytic activity">
    <reaction evidence="1">
        <text>N-acetylneuraminate(in) + H(+)(in) = N-acetylneuraminate(out) + H(+)(out)</text>
        <dbReference type="Rhea" id="RHEA:28987"/>
        <dbReference type="ChEBI" id="CHEBI:15378"/>
        <dbReference type="ChEBI" id="CHEBI:35418"/>
    </reaction>
</comment>
<comment type="subcellular location">
    <subcellularLocation>
        <location evidence="1">Cell inner membrane</location>
        <topology evidence="1">Multi-pass membrane protein</topology>
    </subcellularLocation>
</comment>
<comment type="similarity">
    <text evidence="1">Belongs to the major facilitator superfamily. Sialate:H(+) symporter (SHS) (TC 2.A.1.12) family.</text>
</comment>
<accession>Q668K2</accession>
<protein>
    <recommendedName>
        <fullName evidence="1">Sialic acid transporter NanT</fullName>
    </recommendedName>
    <alternativeName>
        <fullName evidence="1">Sialic acid permease</fullName>
    </alternativeName>
    <alternativeName>
        <fullName evidence="1">Sialic acid/H(+) symporter</fullName>
    </alternativeName>
</protein>
<feature type="chain" id="PRO_0000050319" description="Sialic acid transporter NanT">
    <location>
        <begin position="1"/>
        <end position="510"/>
    </location>
</feature>
<feature type="transmembrane region" description="Helical" evidence="1">
    <location>
        <begin position="35"/>
        <end position="55"/>
    </location>
</feature>
<feature type="transmembrane region" description="Helical" evidence="1">
    <location>
        <begin position="72"/>
        <end position="92"/>
    </location>
</feature>
<feature type="transmembrane region" description="Helical" evidence="1">
    <location>
        <begin position="99"/>
        <end position="119"/>
    </location>
</feature>
<feature type="transmembrane region" description="Helical" evidence="1">
    <location>
        <begin position="120"/>
        <end position="140"/>
    </location>
</feature>
<feature type="transmembrane region" description="Helical" evidence="1">
    <location>
        <begin position="161"/>
        <end position="181"/>
    </location>
</feature>
<feature type="transmembrane region" description="Helical" evidence="1">
    <location>
        <begin position="183"/>
        <end position="203"/>
    </location>
</feature>
<feature type="transmembrane region" description="Helical" evidence="1">
    <location>
        <begin position="240"/>
        <end position="260"/>
    </location>
</feature>
<feature type="transmembrane region" description="Helical" evidence="1">
    <location>
        <begin position="262"/>
        <end position="282"/>
    </location>
</feature>
<feature type="transmembrane region" description="Helical" evidence="1">
    <location>
        <begin position="295"/>
        <end position="315"/>
    </location>
</feature>
<feature type="transmembrane region" description="Helical" evidence="1">
    <location>
        <begin position="330"/>
        <end position="350"/>
    </location>
</feature>
<feature type="transmembrane region" description="Helical" evidence="1">
    <location>
        <begin position="371"/>
        <end position="391"/>
    </location>
</feature>
<feature type="transmembrane region" description="Helical" evidence="1">
    <location>
        <begin position="392"/>
        <end position="412"/>
    </location>
</feature>
<feature type="transmembrane region" description="Helical" evidence="1">
    <location>
        <begin position="418"/>
        <end position="438"/>
    </location>
</feature>
<feature type="transmembrane region" description="Helical" evidence="1">
    <location>
        <begin position="449"/>
        <end position="469"/>
    </location>
</feature>
<organism>
    <name type="scientific">Yersinia pseudotuberculosis serotype I (strain IP32953)</name>
    <dbReference type="NCBI Taxonomy" id="273123"/>
    <lineage>
        <taxon>Bacteria</taxon>
        <taxon>Pseudomonadati</taxon>
        <taxon>Pseudomonadota</taxon>
        <taxon>Gammaproteobacteria</taxon>
        <taxon>Enterobacterales</taxon>
        <taxon>Yersiniaceae</taxon>
        <taxon>Yersinia</taxon>
    </lineage>
</organism>
<reference key="1">
    <citation type="journal article" date="2004" name="Proc. Natl. Acad. Sci. U.S.A.">
        <title>Insights into the evolution of Yersinia pestis through whole-genome comparison with Yersinia pseudotuberculosis.</title>
        <authorList>
            <person name="Chain P.S.G."/>
            <person name="Carniel E."/>
            <person name="Larimer F.W."/>
            <person name="Lamerdin J."/>
            <person name="Stoutland P.O."/>
            <person name="Regala W.M."/>
            <person name="Georgescu A.M."/>
            <person name="Vergez L.M."/>
            <person name="Land M.L."/>
            <person name="Motin V.L."/>
            <person name="Brubaker R.R."/>
            <person name="Fowler J."/>
            <person name="Hinnebusch J."/>
            <person name="Marceau M."/>
            <person name="Medigue C."/>
            <person name="Simonet M."/>
            <person name="Chenal-Francisque V."/>
            <person name="Souza B."/>
            <person name="Dacheux D."/>
            <person name="Elliott J.M."/>
            <person name="Derbise A."/>
            <person name="Hauser L.J."/>
            <person name="Garcia E."/>
        </authorList>
    </citation>
    <scope>NUCLEOTIDE SEQUENCE [LARGE SCALE GENOMIC DNA]</scope>
    <source>
        <strain>IP32953</strain>
    </source>
</reference>
<keyword id="KW-0997">Cell inner membrane</keyword>
<keyword id="KW-1003">Cell membrane</keyword>
<keyword id="KW-0472">Membrane</keyword>
<keyword id="KW-0762">Sugar transport</keyword>
<keyword id="KW-0812">Transmembrane</keyword>
<keyword id="KW-1133">Transmembrane helix</keyword>
<keyword id="KW-0813">Transport</keyword>
<proteinExistence type="inferred from homology"/>
<gene>
    <name evidence="1" type="primary">nanT</name>
    <name type="ordered locus">YPTB2736</name>
</gene>
<dbReference type="EMBL" id="BX936398">
    <property type="protein sequence ID" value="CAH21974.1"/>
    <property type="molecule type" value="Genomic_DNA"/>
</dbReference>
<dbReference type="RefSeq" id="WP_002231046.1">
    <property type="nucleotide sequence ID" value="NZ_CP009712.1"/>
</dbReference>
<dbReference type="SMR" id="Q668K2"/>
<dbReference type="KEGG" id="ypo:BZ17_3893"/>
<dbReference type="KEGG" id="yps:YPTB2736"/>
<dbReference type="PATRIC" id="fig|273123.14.peg.4093"/>
<dbReference type="Proteomes" id="UP000001011">
    <property type="component" value="Chromosome"/>
</dbReference>
<dbReference type="GO" id="GO:0005886">
    <property type="term" value="C:plasma membrane"/>
    <property type="evidence" value="ECO:0007669"/>
    <property type="project" value="UniProtKB-SubCell"/>
</dbReference>
<dbReference type="GO" id="GO:0046943">
    <property type="term" value="F:carboxylic acid transmembrane transporter activity"/>
    <property type="evidence" value="ECO:0007669"/>
    <property type="project" value="TreeGrafter"/>
</dbReference>
<dbReference type="GO" id="GO:0015538">
    <property type="term" value="F:sialic acid:proton symporter activity"/>
    <property type="evidence" value="ECO:0007669"/>
    <property type="project" value="UniProtKB-UniRule"/>
</dbReference>
<dbReference type="CDD" id="cd17316">
    <property type="entry name" value="MFS_SV2_like"/>
    <property type="match status" value="1"/>
</dbReference>
<dbReference type="FunFam" id="1.20.1250.20:FF:000027">
    <property type="entry name" value="Sialic acid transporter NanT"/>
    <property type="match status" value="1"/>
</dbReference>
<dbReference type="FunFam" id="1.20.1250.20:FF:000038">
    <property type="entry name" value="Sialic acid transporter NanT"/>
    <property type="match status" value="1"/>
</dbReference>
<dbReference type="Gene3D" id="1.20.1250.20">
    <property type="entry name" value="MFS general substrate transporter like domains"/>
    <property type="match status" value="2"/>
</dbReference>
<dbReference type="HAMAP" id="MF_01238">
    <property type="entry name" value="MFS_NanT"/>
    <property type="match status" value="1"/>
</dbReference>
<dbReference type="InterPro" id="IPR011701">
    <property type="entry name" value="MFS"/>
</dbReference>
<dbReference type="InterPro" id="IPR020846">
    <property type="entry name" value="MFS_dom"/>
</dbReference>
<dbReference type="InterPro" id="IPR036259">
    <property type="entry name" value="MFS_trans_sf"/>
</dbReference>
<dbReference type="InterPro" id="IPR004742">
    <property type="entry name" value="SA_transporter"/>
</dbReference>
<dbReference type="NCBIfam" id="NF003024">
    <property type="entry name" value="PRK03893.1"/>
    <property type="match status" value="1"/>
</dbReference>
<dbReference type="PANTHER" id="PTHR23508">
    <property type="entry name" value="CARBOXYLIC ACID TRANSPORTER PROTEIN HOMOLOG"/>
    <property type="match status" value="1"/>
</dbReference>
<dbReference type="PANTHER" id="PTHR23508:SF3">
    <property type="entry name" value="SIALIC ACID TRANSPORTER NANT"/>
    <property type="match status" value="1"/>
</dbReference>
<dbReference type="Pfam" id="PF07690">
    <property type="entry name" value="MFS_1"/>
    <property type="match status" value="1"/>
</dbReference>
<dbReference type="SUPFAM" id="SSF103473">
    <property type="entry name" value="MFS general substrate transporter"/>
    <property type="match status" value="1"/>
</dbReference>
<dbReference type="PROSITE" id="PS50850">
    <property type="entry name" value="MFS"/>
    <property type="match status" value="1"/>
</dbReference>
<evidence type="ECO:0000255" key="1">
    <source>
        <dbReference type="HAMAP-Rule" id="MF_01238"/>
    </source>
</evidence>
<name>NANT_YERPS</name>